<gene>
    <name type="primary">US11</name>
</gene>
<sequence length="215" mass="25302">MNLIMLILALWAPVAGSMPELSLTLFDEPPPLVETEPLPPLPDVSEYRVEYSEARCVLRSGGRLEALWTLRGNLSVPTPTPRVYYQTLEGYADRVPTPVEDISESLVAKRYWLRDYRVPQRTKLVLFYFSPCHQCQTYYVECEPRCLVPWVPLWSSLEDIERLLFEDRRLMAYYALTIKSAQYTLMMVAVIQVFWGLYVKGWLHRHFPWMFSDQW</sequence>
<evidence type="ECO:0000250" key="1"/>
<evidence type="ECO:0000250" key="2">
    <source>
        <dbReference type="UniProtKB" id="P09727"/>
    </source>
</evidence>
<evidence type="ECO:0000255" key="3"/>
<evidence type="ECO:0000305" key="4"/>
<feature type="signal peptide" evidence="1">
    <location>
        <begin position="1"/>
        <end position="17"/>
    </location>
</feature>
<feature type="chain" id="PRO_0000037445" description="Unique short US11 glycoprotein">
    <location>
        <begin position="18"/>
        <end position="215"/>
    </location>
</feature>
<feature type="topological domain" description="Lumenal" evidence="3">
    <location>
        <begin position="18"/>
        <end position="182"/>
    </location>
</feature>
<feature type="transmembrane region" description="Helical" evidence="3">
    <location>
        <begin position="183"/>
        <end position="203"/>
    </location>
</feature>
<feature type="topological domain" description="Cytoplasmic" evidence="3">
    <location>
        <begin position="204"/>
        <end position="215"/>
    </location>
</feature>
<feature type="domain" description="Ig-like H-type">
    <location>
        <begin position="47"/>
        <end position="146"/>
    </location>
</feature>
<feature type="glycosylation site" description="N-linked (GlcNAc...) asparagine; by host" evidence="3">
    <location>
        <position position="73"/>
    </location>
</feature>
<feature type="disulfide bond" evidence="1">
    <location>
        <begin position="56"/>
        <end position="142"/>
    </location>
</feature>
<dbReference type="EMBL" id="AY072776">
    <property type="protein sequence ID" value="AAL67144.1"/>
    <property type="molecule type" value="Genomic_DNA"/>
</dbReference>
<dbReference type="TCDB" id="3.A.16.1.1">
    <property type="family name" value="the endoplasmic reticular retrotranslocon (er-rt) family"/>
</dbReference>
<dbReference type="GlyCosmos" id="Q8UZK5">
    <property type="glycosylation" value="1 site, No reported glycans"/>
</dbReference>
<dbReference type="GO" id="GO:0044167">
    <property type="term" value="C:host cell endoplasmic reticulum membrane"/>
    <property type="evidence" value="ECO:0007669"/>
    <property type="project" value="UniProtKB-SubCell"/>
</dbReference>
<dbReference type="GO" id="GO:0016020">
    <property type="term" value="C:membrane"/>
    <property type="evidence" value="ECO:0007669"/>
    <property type="project" value="UniProtKB-KW"/>
</dbReference>
<dbReference type="GO" id="GO:0052031">
    <property type="term" value="P:symbiont-mediated perturbation of host defense response"/>
    <property type="evidence" value="ECO:0007669"/>
    <property type="project" value="InterPro"/>
</dbReference>
<dbReference type="InterPro" id="IPR012536">
    <property type="entry name" value="CMV_US"/>
</dbReference>
<dbReference type="Pfam" id="PF08001">
    <property type="entry name" value="CMV_US"/>
    <property type="match status" value="1"/>
</dbReference>
<keyword id="KW-1015">Disulfide bond</keyword>
<keyword id="KW-0244">Early protein</keyword>
<keyword id="KW-0325">Glycoprotein</keyword>
<keyword id="KW-1038">Host endoplasmic reticulum</keyword>
<keyword id="KW-1043">Host membrane</keyword>
<keyword id="KW-0945">Host-virus interaction</keyword>
<keyword id="KW-0393">Immunoglobulin domain</keyword>
<keyword id="KW-0426">Late protein</keyword>
<keyword id="KW-0472">Membrane</keyword>
<keyword id="KW-0732">Signal</keyword>
<keyword id="KW-0812">Transmembrane</keyword>
<keyword id="KW-1133">Transmembrane helix</keyword>
<keyword id="KW-0899">Viral immunoevasion</keyword>
<organismHost>
    <name type="scientific">Homo sapiens</name>
    <name type="common">Human</name>
    <dbReference type="NCBI Taxonomy" id="9606"/>
</organismHost>
<organism>
    <name type="scientific">Human cytomegalovirus (strain Towne)</name>
    <name type="common">HHV-5</name>
    <name type="synonym">Human herpesvirus 5</name>
    <dbReference type="NCBI Taxonomy" id="10363"/>
    <lineage>
        <taxon>Viruses</taxon>
        <taxon>Duplodnaviria</taxon>
        <taxon>Heunggongvirae</taxon>
        <taxon>Peploviricota</taxon>
        <taxon>Herviviricetes</taxon>
        <taxon>Herpesvirales</taxon>
        <taxon>Orthoherpesviridae</taxon>
        <taxon>Betaherpesvirinae</taxon>
        <taxon>Cytomegalovirus</taxon>
        <taxon>Cytomegalovirus humanbeta5</taxon>
        <taxon>Human cytomegalovirus</taxon>
    </lineage>
</organism>
<comment type="function">
    <text evidence="2">Participates in the inhibition of the host immune response. Redirects newly synthesized major histocompatibility complex (MHC) class I heavy chains via the SEC61 translocon to the cytosol where they undergo proteasome-dependent destruction. In consequence, infected cells are masked for immune recognition by cytotoxic T-lymphocytes.</text>
</comment>
<comment type="subunit">
    <text evidence="2">Interacts with host TRAM1.</text>
</comment>
<comment type="subcellular location">
    <subcellularLocation>
        <location evidence="1">Host endoplasmic reticulum membrane</location>
        <topology evidence="1">Single-pass type I membrane protein</topology>
    </subcellularLocation>
</comment>
<comment type="developmental stage">
    <text>Expressed at early and late period of virus infection.</text>
</comment>
<comment type="similarity">
    <text evidence="4">Belongs to the cytomegalovirus US6 family.</text>
</comment>
<protein>
    <recommendedName>
        <fullName>Unique short US11 glycoprotein</fullName>
    </recommendedName>
    <alternativeName>
        <fullName>HXLF1</fullName>
    </alternativeName>
    <alternativeName>
        <fullName>gpUS11</fullName>
    </alternativeName>
</protein>
<accession>Q8UZK5</accession>
<name>US11_HCMVT</name>
<reference key="1">
    <citation type="submission" date="2002-01" db="EMBL/GenBank/DDBJ databases">
        <title>Immune evasion genes from the Towne strain of human cytomegalovirus.</title>
        <authorList>
            <person name="Crew M.D."/>
        </authorList>
    </citation>
    <scope>NUCLEOTIDE SEQUENCE [GENOMIC DNA]</scope>
</reference>
<proteinExistence type="evidence at transcript level"/>